<reference key="1">
    <citation type="journal article" date="2006" name="Nature">
        <title>The DNA sequence and biological annotation of human chromosome 1.</title>
        <authorList>
            <person name="Gregory S.G."/>
            <person name="Barlow K.F."/>
            <person name="McLay K.E."/>
            <person name="Kaul R."/>
            <person name="Swarbreck D."/>
            <person name="Dunham A."/>
            <person name="Scott C.E."/>
            <person name="Howe K.L."/>
            <person name="Woodfine K."/>
            <person name="Spencer C.C.A."/>
            <person name="Jones M.C."/>
            <person name="Gillson C."/>
            <person name="Searle S."/>
            <person name="Zhou Y."/>
            <person name="Kokocinski F."/>
            <person name="McDonald L."/>
            <person name="Evans R."/>
            <person name="Phillips K."/>
            <person name="Atkinson A."/>
            <person name="Cooper R."/>
            <person name="Jones C."/>
            <person name="Hall R.E."/>
            <person name="Andrews T.D."/>
            <person name="Lloyd C."/>
            <person name="Ainscough R."/>
            <person name="Almeida J.P."/>
            <person name="Ambrose K.D."/>
            <person name="Anderson F."/>
            <person name="Andrew R.W."/>
            <person name="Ashwell R.I.S."/>
            <person name="Aubin K."/>
            <person name="Babbage A.K."/>
            <person name="Bagguley C.L."/>
            <person name="Bailey J."/>
            <person name="Beasley H."/>
            <person name="Bethel G."/>
            <person name="Bird C.P."/>
            <person name="Bray-Allen S."/>
            <person name="Brown J.Y."/>
            <person name="Brown A.J."/>
            <person name="Buckley D."/>
            <person name="Burton J."/>
            <person name="Bye J."/>
            <person name="Carder C."/>
            <person name="Chapman J.C."/>
            <person name="Clark S.Y."/>
            <person name="Clarke G."/>
            <person name="Clee C."/>
            <person name="Cobley V."/>
            <person name="Collier R.E."/>
            <person name="Corby N."/>
            <person name="Coville G.J."/>
            <person name="Davies J."/>
            <person name="Deadman R."/>
            <person name="Dunn M."/>
            <person name="Earthrowl M."/>
            <person name="Ellington A.G."/>
            <person name="Errington H."/>
            <person name="Frankish A."/>
            <person name="Frankland J."/>
            <person name="French L."/>
            <person name="Garner P."/>
            <person name="Garnett J."/>
            <person name="Gay L."/>
            <person name="Ghori M.R.J."/>
            <person name="Gibson R."/>
            <person name="Gilby L.M."/>
            <person name="Gillett W."/>
            <person name="Glithero R.J."/>
            <person name="Grafham D.V."/>
            <person name="Griffiths C."/>
            <person name="Griffiths-Jones S."/>
            <person name="Grocock R."/>
            <person name="Hammond S."/>
            <person name="Harrison E.S.I."/>
            <person name="Hart E."/>
            <person name="Haugen E."/>
            <person name="Heath P.D."/>
            <person name="Holmes S."/>
            <person name="Holt K."/>
            <person name="Howden P.J."/>
            <person name="Hunt A.R."/>
            <person name="Hunt S.E."/>
            <person name="Hunter G."/>
            <person name="Isherwood J."/>
            <person name="James R."/>
            <person name="Johnson C."/>
            <person name="Johnson D."/>
            <person name="Joy A."/>
            <person name="Kay M."/>
            <person name="Kershaw J.K."/>
            <person name="Kibukawa M."/>
            <person name="Kimberley A.M."/>
            <person name="King A."/>
            <person name="Knights A.J."/>
            <person name="Lad H."/>
            <person name="Laird G."/>
            <person name="Lawlor S."/>
            <person name="Leongamornlert D.A."/>
            <person name="Lloyd D.M."/>
            <person name="Loveland J."/>
            <person name="Lovell J."/>
            <person name="Lush M.J."/>
            <person name="Lyne R."/>
            <person name="Martin S."/>
            <person name="Mashreghi-Mohammadi M."/>
            <person name="Matthews L."/>
            <person name="Matthews N.S.W."/>
            <person name="McLaren S."/>
            <person name="Milne S."/>
            <person name="Mistry S."/>
            <person name="Moore M.J.F."/>
            <person name="Nickerson T."/>
            <person name="O'Dell C.N."/>
            <person name="Oliver K."/>
            <person name="Palmeiri A."/>
            <person name="Palmer S.A."/>
            <person name="Parker A."/>
            <person name="Patel D."/>
            <person name="Pearce A.V."/>
            <person name="Peck A.I."/>
            <person name="Pelan S."/>
            <person name="Phelps K."/>
            <person name="Phillimore B.J."/>
            <person name="Plumb R."/>
            <person name="Rajan J."/>
            <person name="Raymond C."/>
            <person name="Rouse G."/>
            <person name="Saenphimmachak C."/>
            <person name="Sehra H.K."/>
            <person name="Sheridan E."/>
            <person name="Shownkeen R."/>
            <person name="Sims S."/>
            <person name="Skuce C.D."/>
            <person name="Smith M."/>
            <person name="Steward C."/>
            <person name="Subramanian S."/>
            <person name="Sycamore N."/>
            <person name="Tracey A."/>
            <person name="Tromans A."/>
            <person name="Van Helmond Z."/>
            <person name="Wall M."/>
            <person name="Wallis J.M."/>
            <person name="White S."/>
            <person name="Whitehead S.L."/>
            <person name="Wilkinson J.E."/>
            <person name="Willey D.L."/>
            <person name="Williams H."/>
            <person name="Wilming L."/>
            <person name="Wray P.W."/>
            <person name="Wu Z."/>
            <person name="Coulson A."/>
            <person name="Vaudin M."/>
            <person name="Sulston J.E."/>
            <person name="Durbin R.M."/>
            <person name="Hubbard T."/>
            <person name="Wooster R."/>
            <person name="Dunham I."/>
            <person name="Carter N.P."/>
            <person name="McVean G."/>
            <person name="Ross M.T."/>
            <person name="Harrow J."/>
            <person name="Olson M.V."/>
            <person name="Beck S."/>
            <person name="Rogers J."/>
            <person name="Bentley D.R."/>
        </authorList>
    </citation>
    <scope>NUCLEOTIDE SEQUENCE [LARGE SCALE GENOMIC DNA]</scope>
</reference>
<reference key="2">
    <citation type="submission" date="2005-07" db="EMBL/GenBank/DDBJ databases">
        <authorList>
            <person name="Mural R.J."/>
            <person name="Istrail S."/>
            <person name="Sutton G.G."/>
            <person name="Florea L."/>
            <person name="Halpern A.L."/>
            <person name="Mobarry C.M."/>
            <person name="Lippert R."/>
            <person name="Walenz B."/>
            <person name="Shatkay H."/>
            <person name="Dew I."/>
            <person name="Miller J.R."/>
            <person name="Flanigan M.J."/>
            <person name="Edwards N.J."/>
            <person name="Bolanos R."/>
            <person name="Fasulo D."/>
            <person name="Halldorsson B.V."/>
            <person name="Hannenhalli S."/>
            <person name="Turner R."/>
            <person name="Yooseph S."/>
            <person name="Lu F."/>
            <person name="Nusskern D.R."/>
            <person name="Shue B.C."/>
            <person name="Zheng X.H."/>
            <person name="Zhong F."/>
            <person name="Delcher A.L."/>
            <person name="Huson D.H."/>
            <person name="Kravitz S.A."/>
            <person name="Mouchard L."/>
            <person name="Reinert K."/>
            <person name="Remington K.A."/>
            <person name="Clark A.G."/>
            <person name="Waterman M.S."/>
            <person name="Eichler E.E."/>
            <person name="Adams M.D."/>
            <person name="Hunkapiller M.W."/>
            <person name="Myers E.W."/>
            <person name="Venter J.C."/>
        </authorList>
    </citation>
    <scope>NUCLEOTIDE SEQUENCE [LARGE SCALE GENOMIC DNA]</scope>
</reference>
<reference key="3">
    <citation type="journal article" date="2004" name="Genome Res.">
        <title>The status, quality, and expansion of the NIH full-length cDNA project: the Mammalian Gene Collection (MGC).</title>
        <authorList>
            <consortium name="The MGC Project Team"/>
        </authorList>
    </citation>
    <scope>NUCLEOTIDE SEQUENCE [LARGE SCALE MRNA] (ISOFORMS 1 AND 4)</scope>
    <scope>NUCLEOTIDE SEQUENCE [LARGE SCALE MRNA] OF 427-775 (ISOFORM 5)</scope>
    <source>
        <tissue>Brain</tissue>
        <tissue>Testis</tissue>
    </source>
</reference>
<reference key="4">
    <citation type="journal article" date="2007" name="BMC Genomics">
        <title>The full-ORF clone resource of the German cDNA consortium.</title>
        <authorList>
            <person name="Bechtel S."/>
            <person name="Rosenfelder H."/>
            <person name="Duda A."/>
            <person name="Schmidt C.P."/>
            <person name="Ernst U."/>
            <person name="Wellenreuther R."/>
            <person name="Mehrle A."/>
            <person name="Schuster C."/>
            <person name="Bahr A."/>
            <person name="Bloecker H."/>
            <person name="Heubner D."/>
            <person name="Hoerlein A."/>
            <person name="Michel G."/>
            <person name="Wedler H."/>
            <person name="Koehrer K."/>
            <person name="Ottenwaelder B."/>
            <person name="Poustka A."/>
            <person name="Wiemann S."/>
            <person name="Schupp I."/>
        </authorList>
    </citation>
    <scope>NUCLEOTIDE SEQUENCE [LARGE SCALE MRNA] OF 106-775 (ISOFORM 3)</scope>
    <source>
        <tissue>Brain</tissue>
    </source>
</reference>
<reference key="5">
    <citation type="journal article" date="2004" name="Nat. Genet.">
        <title>Complete sequencing and characterization of 21,243 full-length human cDNAs.</title>
        <authorList>
            <person name="Ota T."/>
            <person name="Suzuki Y."/>
            <person name="Nishikawa T."/>
            <person name="Otsuki T."/>
            <person name="Sugiyama T."/>
            <person name="Irie R."/>
            <person name="Wakamatsu A."/>
            <person name="Hayashi K."/>
            <person name="Sato H."/>
            <person name="Nagai K."/>
            <person name="Kimura K."/>
            <person name="Makita H."/>
            <person name="Sekine M."/>
            <person name="Obayashi M."/>
            <person name="Nishi T."/>
            <person name="Shibahara T."/>
            <person name="Tanaka T."/>
            <person name="Ishii S."/>
            <person name="Yamamoto J."/>
            <person name="Saito K."/>
            <person name="Kawai Y."/>
            <person name="Isono Y."/>
            <person name="Nakamura Y."/>
            <person name="Nagahari K."/>
            <person name="Murakami K."/>
            <person name="Yasuda T."/>
            <person name="Iwayanagi T."/>
            <person name="Wagatsuma M."/>
            <person name="Shiratori A."/>
            <person name="Sudo H."/>
            <person name="Hosoiri T."/>
            <person name="Kaku Y."/>
            <person name="Kodaira H."/>
            <person name="Kondo H."/>
            <person name="Sugawara M."/>
            <person name="Takahashi M."/>
            <person name="Kanda K."/>
            <person name="Yokoi T."/>
            <person name="Furuya T."/>
            <person name="Kikkawa E."/>
            <person name="Omura Y."/>
            <person name="Abe K."/>
            <person name="Kamihara K."/>
            <person name="Katsuta N."/>
            <person name="Sato K."/>
            <person name="Tanikawa M."/>
            <person name="Yamazaki M."/>
            <person name="Ninomiya K."/>
            <person name="Ishibashi T."/>
            <person name="Yamashita H."/>
            <person name="Murakawa K."/>
            <person name="Fujimori K."/>
            <person name="Tanai H."/>
            <person name="Kimata M."/>
            <person name="Watanabe M."/>
            <person name="Hiraoka S."/>
            <person name="Chiba Y."/>
            <person name="Ishida S."/>
            <person name="Ono Y."/>
            <person name="Takiguchi S."/>
            <person name="Watanabe S."/>
            <person name="Yosida M."/>
            <person name="Hotuta T."/>
            <person name="Kusano J."/>
            <person name="Kanehori K."/>
            <person name="Takahashi-Fujii A."/>
            <person name="Hara H."/>
            <person name="Tanase T.-O."/>
            <person name="Nomura Y."/>
            <person name="Togiya S."/>
            <person name="Komai F."/>
            <person name="Hara R."/>
            <person name="Takeuchi K."/>
            <person name="Arita M."/>
            <person name="Imose N."/>
            <person name="Musashino K."/>
            <person name="Yuuki H."/>
            <person name="Oshima A."/>
            <person name="Sasaki N."/>
            <person name="Aotsuka S."/>
            <person name="Yoshikawa Y."/>
            <person name="Matsunawa H."/>
            <person name="Ichihara T."/>
            <person name="Shiohata N."/>
            <person name="Sano S."/>
            <person name="Moriya S."/>
            <person name="Momiyama H."/>
            <person name="Satoh N."/>
            <person name="Takami S."/>
            <person name="Terashima Y."/>
            <person name="Suzuki O."/>
            <person name="Nakagawa S."/>
            <person name="Senoh A."/>
            <person name="Mizoguchi H."/>
            <person name="Goto Y."/>
            <person name="Shimizu F."/>
            <person name="Wakebe H."/>
            <person name="Hishigaki H."/>
            <person name="Watanabe T."/>
            <person name="Sugiyama A."/>
            <person name="Takemoto M."/>
            <person name="Kawakami B."/>
            <person name="Yamazaki M."/>
            <person name="Watanabe K."/>
            <person name="Kumagai A."/>
            <person name="Itakura S."/>
            <person name="Fukuzumi Y."/>
            <person name="Fujimori Y."/>
            <person name="Komiyama M."/>
            <person name="Tashiro H."/>
            <person name="Tanigami A."/>
            <person name="Fujiwara T."/>
            <person name="Ono T."/>
            <person name="Yamada K."/>
            <person name="Fujii Y."/>
            <person name="Ozaki K."/>
            <person name="Hirao M."/>
            <person name="Ohmori Y."/>
            <person name="Kawabata A."/>
            <person name="Hikiji T."/>
            <person name="Kobatake N."/>
            <person name="Inagaki H."/>
            <person name="Ikema Y."/>
            <person name="Okamoto S."/>
            <person name="Okitani R."/>
            <person name="Kawakami T."/>
            <person name="Noguchi S."/>
            <person name="Itoh T."/>
            <person name="Shigeta K."/>
            <person name="Senba T."/>
            <person name="Matsumura K."/>
            <person name="Nakajima Y."/>
            <person name="Mizuno T."/>
            <person name="Morinaga M."/>
            <person name="Sasaki M."/>
            <person name="Togashi T."/>
            <person name="Oyama M."/>
            <person name="Hata H."/>
            <person name="Watanabe M."/>
            <person name="Komatsu T."/>
            <person name="Mizushima-Sugano J."/>
            <person name="Satoh T."/>
            <person name="Shirai Y."/>
            <person name="Takahashi Y."/>
            <person name="Nakagawa K."/>
            <person name="Okumura K."/>
            <person name="Nagase T."/>
            <person name="Nomura N."/>
            <person name="Kikuchi H."/>
            <person name="Masuho Y."/>
            <person name="Yamashita R."/>
            <person name="Nakai K."/>
            <person name="Yada T."/>
            <person name="Nakamura Y."/>
            <person name="Ohara O."/>
            <person name="Isogai T."/>
            <person name="Sugano S."/>
        </authorList>
    </citation>
    <scope>NUCLEOTIDE SEQUENCE [LARGE SCALE MRNA] OF 376-775 (ISOFORM 5)</scope>
</reference>
<reference key="6">
    <citation type="journal article" date="2005" name="Nat. Biotechnol.">
        <title>Immunoaffinity profiling of tyrosine phosphorylation in cancer cells.</title>
        <authorList>
            <person name="Rush J."/>
            <person name="Moritz A."/>
            <person name="Lee K.A."/>
            <person name="Guo A."/>
            <person name="Goss V.L."/>
            <person name="Spek E.J."/>
            <person name="Zhang H."/>
            <person name="Zha X.-M."/>
            <person name="Polakiewicz R.D."/>
            <person name="Comb M.J."/>
        </authorList>
    </citation>
    <scope>IDENTIFICATION BY MASS SPECTROMETRY [LARGE SCALE ANALYSIS]</scope>
</reference>
<reference key="7">
    <citation type="journal article" date="2008" name="Proc. Natl. Acad. Sci. U.S.A.">
        <title>A quantitative atlas of mitotic phosphorylation.</title>
        <authorList>
            <person name="Dephoure N."/>
            <person name="Zhou C."/>
            <person name="Villen J."/>
            <person name="Beausoleil S.A."/>
            <person name="Bakalarski C.E."/>
            <person name="Elledge S.J."/>
            <person name="Gygi S.P."/>
        </authorList>
    </citation>
    <scope>IDENTIFICATION BY MASS SPECTROMETRY [LARGE SCALE ANALYSIS]</scope>
    <source>
        <tissue>Cervix carcinoma</tissue>
    </source>
</reference>
<reference key="8">
    <citation type="journal article" date="2009" name="Sci. Signal.">
        <title>Quantitative phosphoproteomic analysis of T cell receptor signaling reveals system-wide modulation of protein-protein interactions.</title>
        <authorList>
            <person name="Mayya V."/>
            <person name="Lundgren D.H."/>
            <person name="Hwang S.-I."/>
            <person name="Rezaul K."/>
            <person name="Wu L."/>
            <person name="Eng J.K."/>
            <person name="Rodionov V."/>
            <person name="Han D.K."/>
        </authorList>
    </citation>
    <scope>PHOSPHORYLATION [LARGE SCALE ANALYSIS] AT SER-652</scope>
    <scope>IDENTIFICATION BY MASS SPECTROMETRY [LARGE SCALE ANALYSIS]</scope>
    <source>
        <tissue>Leukemic T-cell</tissue>
    </source>
</reference>
<reference key="9">
    <citation type="journal article" date="2010" name="J. Biol. Chem.">
        <title>The connecdenn family, Rab35 guanine nucleotide exchange factors interfacing with the clathrin machinery.</title>
        <authorList>
            <person name="Marat A.L."/>
            <person name="McPherson P.S."/>
        </authorList>
    </citation>
    <scope>IDENTIFICATION (ISOFORM 5)</scope>
    <scope>SUBCELLULAR LOCATION</scope>
    <scope>FUNCTION</scope>
    <scope>INTERACTION WITH AP2A2; AP2B1; CLTC AND RAB35</scope>
    <scope>MUTAGENESIS OF LYS-489; LYS-500; ARG-501; LYS-502; ARG-507 AND LYS-509</scope>
</reference>
<reference key="10">
    <citation type="journal article" date="2010" name="J. Cell Biol.">
        <title>Family-wide characterization of the DENN domain Rab GDP-GTP exchange factors.</title>
        <authorList>
            <person name="Yoshimura S."/>
            <person name="Gerondopoulos A."/>
            <person name="Linford A."/>
            <person name="Rigden D.J."/>
            <person name="Barr F.A."/>
        </authorList>
    </citation>
    <scope>FUNCTION</scope>
</reference>
<reference key="11">
    <citation type="journal article" date="2010" name="N. Engl. J. Med.">
        <title>Variants of DENND1B associated with asthma in children.</title>
        <authorList>
            <person name="Sleiman P.M."/>
            <person name="Flory J."/>
            <person name="Imielinski M."/>
            <person name="Bradfield J.P."/>
            <person name="Annaiah K."/>
            <person name="Willis-Owen S.A."/>
            <person name="Wang K."/>
            <person name="Rafaels N.M."/>
            <person name="Michel S."/>
            <person name="Bonnelykke K."/>
            <person name="Zhang H."/>
            <person name="Kim C.E."/>
            <person name="Frackelton E.C."/>
            <person name="Glessner J.T."/>
            <person name="Hou C."/>
            <person name="Otieno F.G."/>
            <person name="Santa E."/>
            <person name="Thomas K."/>
            <person name="Smith R.M."/>
            <person name="Glaberson W.R."/>
            <person name="Garris M."/>
            <person name="Chiavacci R.M."/>
            <person name="Beaty T.H."/>
            <person name="Ruczinski I."/>
            <person name="Orange J.M."/>
            <person name="Allen J."/>
            <person name="Spergel J.M."/>
            <person name="Grundmeier R."/>
            <person name="Mathias R.A."/>
            <person name="Christie J.D."/>
            <person name="von Mutius E."/>
            <person name="Cookson W.O."/>
            <person name="Kabesch M."/>
            <person name="Moffatt M.F."/>
            <person name="Grunstein M.M."/>
            <person name="Barnes K.C."/>
            <person name="Devoto M."/>
            <person name="Magnusson M."/>
            <person name="Li H."/>
            <person name="Grant S.F."/>
            <person name="Bisgaard H."/>
            <person name="Hakonarson H."/>
        </authorList>
    </citation>
    <scope>INVOLVEMENT IN ASTHMA</scope>
    <scope>TISSUE SPECIFICITY</scope>
</reference>
<reference key="12">
    <citation type="journal article" date="2014" name="Elife">
        <title>Diversity and plasticity in Rab GTPase nucleotide release mechanism has consequences for Rab activation and inactivation.</title>
        <authorList>
            <person name="Langemeyer L."/>
            <person name="Nunes Bastos R."/>
            <person name="Cai Y."/>
            <person name="Itzen A."/>
            <person name="Reinisch K.M."/>
            <person name="Barr F.A."/>
        </authorList>
    </citation>
    <scope>FUNCTION</scope>
    <scope>INTERACTION WITH RAB35</scope>
</reference>
<reference key="13">
    <citation type="journal article" date="2015" name="J. Biol. Chem.">
        <title>Phosphorylation-dependent regulation of Connecdenn/DENND1 guanine nucleotide exchange factors.</title>
        <authorList>
            <person name="Kulasekaran G."/>
            <person name="Nossova N."/>
            <person name="Marat A.L."/>
            <person name="Lund I."/>
            <person name="Cremer C."/>
            <person name="Ioannou M.S."/>
            <person name="McPherson P.S."/>
        </authorList>
    </citation>
    <scope>PHOSPHORYLATION</scope>
</reference>
<reference key="14">
    <citation type="journal article" date="2016" name="Cell">
        <title>Regulation of T cell receptor signaling by DENND1B in TH2 cells and allergic disease.</title>
        <authorList>
            <person name="Yang C.W."/>
            <person name="Hojer C.D."/>
            <person name="Zhou M."/>
            <person name="Wu X."/>
            <person name="Wuster A."/>
            <person name="Lee W.P."/>
            <person name="Yaspan B.L."/>
            <person name="Chan A.C."/>
        </authorList>
    </citation>
    <scope>FUNCTION</scope>
    <scope>INVOLVEMENT IN ASTHMA</scope>
</reference>
<reference key="15">
    <citation type="journal article" date="2011" name="Proc. Natl. Acad. Sci. U.S.A.">
        <title>Insights regarding guanine nucleotide exchange from the structure of a DENN-domain protein complexed with its Rab GTPase substrate.</title>
        <authorList>
            <person name="Wu X."/>
            <person name="Bradley M.J."/>
            <person name="Cai Y."/>
            <person name="Kummel D."/>
            <person name="De La Cruz E.M."/>
            <person name="Barr F.A."/>
            <person name="Reinisch K.M."/>
        </authorList>
    </citation>
    <scope>X-RAY CRYSTALLOGRAPHY (2.1 ANGSTROMS) OF 1-410 IN COMPLEX WITH RAB35</scope>
</reference>
<accession>Q6P3S1</accession>
<accession>B5MD89</accession>
<accession>D3PFD5</accession>
<accession>Q5T3B8</accession>
<accession>Q5T3B9</accession>
<accession>Q5T3C1</accession>
<accession>Q5TAI8</accession>
<accession>Q6B0I8</accession>
<accession>Q8NDT1</accession>
<accession>Q8TBE6</accession>
<accession>Q9H774</accession>
<accession>Q9NXU2</accession>
<keyword id="KW-0002">3D-structure</keyword>
<keyword id="KW-0025">Alternative splicing</keyword>
<keyword id="KW-1058">Asthma</keyword>
<keyword id="KW-0963">Cytoplasm</keyword>
<keyword id="KW-0968">Cytoplasmic vesicle</keyword>
<keyword id="KW-0344">Guanine-nucleotide releasing factor</keyword>
<keyword id="KW-0597">Phosphoprotein</keyword>
<keyword id="KW-0653">Protein transport</keyword>
<keyword id="KW-1267">Proteomics identification</keyword>
<keyword id="KW-1185">Reference proteome</keyword>
<keyword id="KW-0813">Transport</keyword>
<proteinExistence type="evidence at protein level"/>
<name>DEN1B_HUMAN</name>
<protein>
    <recommendedName>
        <fullName evidence="17">DENN domain-containing protein 1B</fullName>
    </recommendedName>
    <alternativeName>
        <fullName evidence="14">Connecdenn 2</fullName>
    </alternativeName>
    <alternativeName>
        <fullName evidence="17">Protein FAM31B</fullName>
    </alternativeName>
</protein>
<comment type="function">
    <text evidence="5 6 8 10">Guanine nucleotide exchange factor (GEF) for RAB35 that acts as a regulator of T-cell receptor (TCR) internalization in TH2 cells (PubMed:20154091, PubMed:20937701, PubMed:24520163, PubMed:26774822). Acts by promoting the exchange of GDP to GTP, converting inactive GDP-bound RAB35 into its active GTP-bound form (PubMed:20154091, PubMed:20937701). Plays a role in clathrin-mediated endocytosis (PubMed:20154091). Controls cytokine production in TH2 lymphocytes by controlling the rate of TCR internalization and routing to endosomes: acts by mediating clathrin-mediated endocytosis of TCR via its interaction with the adapter protein complex 2 (AP-2) and GEF activity (PubMed:26774822). Dysregulation leads to impaired TCR down-modulation and recycling, affecting cytokine production in TH2 cells (PubMed:26774822).</text>
</comment>
<comment type="subunit">
    <text evidence="1 5 7 8">Interacts with RAB35 (PubMed:22065758, PubMed:24520163). Interacts with clathrin heavy chain/CLTC (PubMed:20154091). Interacts with components of the adapter protein complex 2 (AP-2) AP2A2 and AP2B1 (PubMed:20154091). Interacts with CD3E (By similarity).</text>
</comment>
<comment type="interaction">
    <interactant intactId="EBI-12105346">
        <id>Q6P3S1-5</id>
    </interactant>
    <interactant intactId="EBI-739832">
        <id>Q8TBB1</id>
        <label>LNX1</label>
    </interactant>
    <organismsDiffer>false</organismsDiffer>
    <experiments>3</experiments>
</comment>
<comment type="subcellular location">
    <subcellularLocation>
        <location evidence="5">Cytoplasm</location>
        <location evidence="5">Cytosol</location>
    </subcellularLocation>
    <subcellularLocation>
        <location evidence="5">Cytoplasmic vesicle</location>
        <location evidence="5">Clathrin-coated vesicle</location>
    </subcellularLocation>
</comment>
<comment type="alternative products">
    <event type="alternative splicing"/>
    <isoform>
        <id>Q6P3S1-1</id>
        <name>5</name>
        <sequence type="displayed"/>
    </isoform>
    <isoform>
        <id>Q6P3S1-2</id>
        <name>2</name>
        <sequence type="described" ref="VSP_028083 VSP_034515"/>
    </isoform>
    <isoform>
        <id>Q6P3S1-3</id>
        <name>3</name>
        <sequence type="described" ref="VSP_028083 VSP_028084 VSP_028085"/>
    </isoform>
    <isoform>
        <id>Q6P3S1-4</id>
        <name>4</name>
        <sequence type="described" ref="VSP_028082 VSP_028083 VSP_034515"/>
    </isoform>
    <isoform>
        <id>Q6P3S1-5</id>
        <name>1</name>
        <name>DENND1B-S</name>
        <sequence type="described" ref="VSP_034515"/>
    </isoform>
</comment>
<comment type="tissue specificity">
    <text evidence="4">Highly expressed in dendritic and natural killer cells and at lower levels in other myeloid lineage cells and in pituitary. Significantly up-regulated in effector memory T-cells as compared with naive T-cells.</text>
</comment>
<comment type="domain">
    <text evidence="1">The FXDXF motif mediates interaction the AP-2 complex.</text>
</comment>
<comment type="domain">
    <text evidence="1">The clathrin box motif mediates interaction with clathrin.</text>
</comment>
<comment type="PTM">
    <text evidence="9">Phosphorylated on serine and/or threonine, possibly regulating the guanine nucleotide exchange factor (GEF) activity.</text>
</comment>
<comment type="disease" evidence="4 10">
    <disease id="DI-02482">
        <name>Asthma</name>
        <acronym>ASTHMA</acronym>
        <description>The most common chronic disease affecting children and young adults. It is a complex genetic disorder with a heterogeneous phenotype, largely attributed to the interactions among many genes and between these genes and the environment. It is characterized by recurrent attacks of paroxysmal dyspnea, with wheezing due to spasmodic contraction of the bronchi.</description>
        <dbReference type="MIM" id="600807"/>
    </disease>
    <text evidence="10">Disease susceptibility is associated with variants affecting the gene represented in this entry. Asthma susceptibility is probably caused by decreased TCR down-modulation and recycling in TH2 cells, causing prolonged TCR signaling and increased cytokine production in TH2 lymphocytes (PubMed:26774822).</text>
</comment>
<comment type="sequence caution" evidence="15">
    <conflict type="erroneous initiation">
        <sequence resource="EMBL-CDS" id="AAH74735"/>
    </conflict>
    <text>Truncated N-terminus.</text>
</comment>
<comment type="sequence caution" evidence="15">
    <conflict type="erroneous initiation">
        <sequence resource="EMBL-CDS" id="BAA90918"/>
    </conflict>
    <text>Truncated N-terminus.</text>
</comment>
<comment type="sequence caution" evidence="15">
    <conflict type="erroneous initiation">
        <sequence resource="EMBL-CDS" id="BAB15024"/>
    </conflict>
    <text>Truncated N-terminus.</text>
</comment>
<comment type="sequence caution" evidence="15">
    <conflict type="erroneous gene model prediction">
        <sequence resource="EMBL-CDS" id="EAW91280"/>
    </conflict>
</comment>
<evidence type="ECO:0000250" key="1">
    <source>
        <dbReference type="UniProtKB" id="Q3U1T9"/>
    </source>
</evidence>
<evidence type="ECO:0000255" key="2">
    <source>
        <dbReference type="PROSITE-ProRule" id="PRU00304"/>
    </source>
</evidence>
<evidence type="ECO:0000256" key="3">
    <source>
        <dbReference type="SAM" id="MobiDB-lite"/>
    </source>
</evidence>
<evidence type="ECO:0000269" key="4">
    <source>
    </source>
</evidence>
<evidence type="ECO:0000269" key="5">
    <source>
    </source>
</evidence>
<evidence type="ECO:0000269" key="6">
    <source>
    </source>
</evidence>
<evidence type="ECO:0000269" key="7">
    <source>
    </source>
</evidence>
<evidence type="ECO:0000269" key="8">
    <source>
    </source>
</evidence>
<evidence type="ECO:0000269" key="9">
    <source>
    </source>
</evidence>
<evidence type="ECO:0000269" key="10">
    <source>
    </source>
</evidence>
<evidence type="ECO:0000303" key="11">
    <source>
    </source>
</evidence>
<evidence type="ECO:0000303" key="12">
    <source>
    </source>
</evidence>
<evidence type="ECO:0000303" key="13">
    <source>
    </source>
</evidence>
<evidence type="ECO:0000303" key="14">
    <source>
    </source>
</evidence>
<evidence type="ECO:0000305" key="15"/>
<evidence type="ECO:0000305" key="16">
    <source>
    </source>
</evidence>
<evidence type="ECO:0000312" key="17">
    <source>
        <dbReference type="HGNC" id="HGNC:28404"/>
    </source>
</evidence>
<evidence type="ECO:0007744" key="18">
    <source>
    </source>
</evidence>
<evidence type="ECO:0007829" key="19">
    <source>
        <dbReference type="PDB" id="3TW8"/>
    </source>
</evidence>
<sequence>MDCRTKANPDRTFDLVLKVKCHASENEDPVVLWKFPEDFGDQEILQSVPKFCFPFDVERVSQNQVGQHFTFVLTDIESKQRFGFCRLTSGGTICLCILSYLPWFEVYYKLLNTLADYLAKELENDLNETLRSLYNHPVPKANTPVNLSVNQEIFIACEQVLKDQPALVPHSYFIAPDVTGLPTIPESRNLTEYFVAVDVNNMLQLYASMLHERRIVIISSKLSTLTACIHGSAALLYPMYWQHIYIPVLPPHLLDYCCAPMPYLIGIHSSLIERVKNKSLEDVVMLNVDTNTLESPFSDLNNLPSDVVSALKNKLKKQSTATGDGVARAFLRAQAALFGSYRDALRYKPGEPITFCEESFVKHRSSVMKQFLETAINLQLFKQFIDGRLAKLNAGRGFSDVFEEEITSGGFCGGNPRSYQQWVHTVKKGGALFNTAMTKATPAVRTAYKFAKNHAKLGLKEVKSKLKHKENEEDYGTCSSSVQYTPVYKLHNEKGGNSEKRKLAQARLKRPLKSLDGALYDDEDDDDIERASKLSSEDGEEASAYLYESDDSVETRVKTPYSGEMDLLGEILDTLSTHSSDQGKLAAAKSLDFFRSMDDIDYKPTNKSNAPSENNLAFLCGGSGDQAEWNLGQDDSALHGKHLPPSPRKRVSSSGLTDSLFILKEENSNKHLGADNVSDPTSGLDFQLTSPEVSQTDKGKTEKRETLSQISDDLLIPGLGRHSSTFVPWEKEGKEAKETSEDIGLLHEVVSLCHMTSDFQQSLNISDKNTNGNQT</sequence>
<gene>
    <name evidence="17" type="primary">DENND1B</name>
    <name evidence="17" type="synonym">C1orf218</name>
    <name evidence="17" type="synonym">FAM31B</name>
</gene>
<organism>
    <name type="scientific">Homo sapiens</name>
    <name type="common">Human</name>
    <dbReference type="NCBI Taxonomy" id="9606"/>
    <lineage>
        <taxon>Eukaryota</taxon>
        <taxon>Metazoa</taxon>
        <taxon>Chordata</taxon>
        <taxon>Craniata</taxon>
        <taxon>Vertebrata</taxon>
        <taxon>Euteleostomi</taxon>
        <taxon>Mammalia</taxon>
        <taxon>Eutheria</taxon>
        <taxon>Euarchontoglires</taxon>
        <taxon>Primates</taxon>
        <taxon>Haplorrhini</taxon>
        <taxon>Catarrhini</taxon>
        <taxon>Hominidae</taxon>
        <taxon>Homo</taxon>
    </lineage>
</organism>
<dbReference type="EMBL" id="AL139136">
    <property type="status" value="NOT_ANNOTATED_CDS"/>
    <property type="molecule type" value="Genomic_DNA"/>
</dbReference>
<dbReference type="EMBL" id="AL365258">
    <property type="status" value="NOT_ANNOTATED_CDS"/>
    <property type="molecule type" value="Genomic_DNA"/>
</dbReference>
<dbReference type="EMBL" id="CH471067">
    <property type="protein sequence ID" value="EAW91280.1"/>
    <property type="status" value="ALT_SEQ"/>
    <property type="molecule type" value="Genomic_DNA"/>
</dbReference>
<dbReference type="EMBL" id="CH471067">
    <property type="protein sequence ID" value="EAW91281.1"/>
    <property type="molecule type" value="Genomic_DNA"/>
</dbReference>
<dbReference type="EMBL" id="CH471067">
    <property type="protein sequence ID" value="EAW91285.1"/>
    <property type="molecule type" value="Genomic_DNA"/>
</dbReference>
<dbReference type="EMBL" id="BC022561">
    <property type="protein sequence ID" value="AAH22561.1"/>
    <property type="molecule type" value="mRNA"/>
</dbReference>
<dbReference type="EMBL" id="BC063877">
    <property type="protein sequence ID" value="AAH63877.1"/>
    <property type="molecule type" value="mRNA"/>
</dbReference>
<dbReference type="EMBL" id="BC074735">
    <property type="protein sequence ID" value="AAH74735.2"/>
    <property type="status" value="ALT_INIT"/>
    <property type="molecule type" value="mRNA"/>
</dbReference>
<dbReference type="EMBL" id="AL831839">
    <property type="protein sequence ID" value="CAD38548.1"/>
    <property type="molecule type" value="mRNA"/>
</dbReference>
<dbReference type="EMBL" id="AK000061">
    <property type="protein sequence ID" value="BAA90918.1"/>
    <property type="status" value="ALT_INIT"/>
    <property type="molecule type" value="mRNA"/>
</dbReference>
<dbReference type="EMBL" id="AK024832">
    <property type="protein sequence ID" value="BAB15024.1"/>
    <property type="status" value="ALT_INIT"/>
    <property type="molecule type" value="mRNA"/>
</dbReference>
<dbReference type="EMBL" id="BK006960">
    <property type="protein sequence ID" value="DAA12502.1"/>
    <property type="molecule type" value="mRNA"/>
</dbReference>
<dbReference type="CCDS" id="CCDS41452.2">
    <molecule id="Q6P3S1-5"/>
</dbReference>
<dbReference type="CCDS" id="CCDS72996.1">
    <molecule id="Q6P3S1-4"/>
</dbReference>
<dbReference type="CCDS" id="CCDS72997.1">
    <molecule id="Q6P3S1-1"/>
</dbReference>
<dbReference type="RefSeq" id="NP_001182144.1">
    <molecule id="Q6P3S1-1"/>
    <property type="nucleotide sequence ID" value="NM_001195215.2"/>
</dbReference>
<dbReference type="RefSeq" id="NP_001182145.1">
    <property type="nucleotide sequence ID" value="NM_001195216.1"/>
</dbReference>
<dbReference type="RefSeq" id="NP_001287787.1">
    <molecule id="Q6P3S1-4"/>
    <property type="nucleotide sequence ID" value="NM_001300858.2"/>
</dbReference>
<dbReference type="RefSeq" id="NP_659414.2">
    <molecule id="Q6P3S1-5"/>
    <property type="nucleotide sequence ID" value="NM_144977.5"/>
</dbReference>
<dbReference type="PDB" id="3TW8">
    <property type="method" value="X-ray"/>
    <property type="resolution" value="2.10 A"/>
    <property type="chains" value="A/C=1-410"/>
</dbReference>
<dbReference type="PDBsum" id="3TW8"/>
<dbReference type="SMR" id="Q6P3S1"/>
<dbReference type="BioGRID" id="127867">
    <property type="interactions" value="23"/>
</dbReference>
<dbReference type="FunCoup" id="Q6P3S1">
    <property type="interactions" value="2877"/>
</dbReference>
<dbReference type="IntAct" id="Q6P3S1">
    <property type="interactions" value="12"/>
</dbReference>
<dbReference type="STRING" id="9606.ENSP00000479816"/>
<dbReference type="iPTMnet" id="Q6P3S1"/>
<dbReference type="PhosphoSitePlus" id="Q6P3S1"/>
<dbReference type="BioMuta" id="DENND1B"/>
<dbReference type="DMDM" id="74749089"/>
<dbReference type="jPOST" id="Q6P3S1"/>
<dbReference type="MassIVE" id="Q6P3S1"/>
<dbReference type="PaxDb" id="9606-ENSP00000479816"/>
<dbReference type="PeptideAtlas" id="Q6P3S1"/>
<dbReference type="ProteomicsDB" id="66926">
    <molecule id="Q6P3S1-1"/>
</dbReference>
<dbReference type="ProteomicsDB" id="66927">
    <molecule id="Q6P3S1-2"/>
</dbReference>
<dbReference type="ProteomicsDB" id="66928">
    <molecule id="Q6P3S1-3"/>
</dbReference>
<dbReference type="ProteomicsDB" id="66929">
    <molecule id="Q6P3S1-4"/>
</dbReference>
<dbReference type="ProteomicsDB" id="66930">
    <molecule id="Q6P3S1-5"/>
</dbReference>
<dbReference type="Antibodypedia" id="34481">
    <property type="antibodies" value="152 antibodies from 20 providers"/>
</dbReference>
<dbReference type="DNASU" id="163486"/>
<dbReference type="Ensembl" id="ENST00000235453.8">
    <molecule id="Q6P3S1-4"/>
    <property type="protein sequence ID" value="ENSP00000235453.4"/>
    <property type="gene ID" value="ENSG00000213047.13"/>
</dbReference>
<dbReference type="Ensembl" id="ENST00000367396.7">
    <molecule id="Q6P3S1-5"/>
    <property type="protein sequence ID" value="ENSP00000356366.3"/>
    <property type="gene ID" value="ENSG00000213047.13"/>
</dbReference>
<dbReference type="Ensembl" id="ENST00000620048.6">
    <molecule id="Q6P3S1-1"/>
    <property type="protein sequence ID" value="ENSP00000479816.1"/>
    <property type="gene ID" value="ENSG00000213047.13"/>
</dbReference>
<dbReference type="GeneID" id="163486"/>
<dbReference type="KEGG" id="hsa:163486"/>
<dbReference type="MANE-Select" id="ENST00000620048.6">
    <property type="protein sequence ID" value="ENSP00000479816.1"/>
    <property type="RefSeq nucleotide sequence ID" value="NM_001195215.2"/>
    <property type="RefSeq protein sequence ID" value="NP_001182144.1"/>
</dbReference>
<dbReference type="UCSC" id="uc001gue.4">
    <molecule id="Q6P3S1-1"/>
    <property type="organism name" value="human"/>
</dbReference>
<dbReference type="AGR" id="HGNC:28404"/>
<dbReference type="CTD" id="163486"/>
<dbReference type="DisGeNET" id="163486"/>
<dbReference type="GeneCards" id="DENND1B"/>
<dbReference type="HGNC" id="HGNC:28404">
    <property type="gene designation" value="DENND1B"/>
</dbReference>
<dbReference type="HPA" id="ENSG00000213047">
    <property type="expression patterns" value="Low tissue specificity"/>
</dbReference>
<dbReference type="MIM" id="600807">
    <property type="type" value="phenotype"/>
</dbReference>
<dbReference type="MIM" id="613292">
    <property type="type" value="gene"/>
</dbReference>
<dbReference type="neXtProt" id="NX_Q6P3S1"/>
<dbReference type="OpenTargets" id="ENSG00000213047"/>
<dbReference type="PharmGKB" id="PA134951951"/>
<dbReference type="VEuPathDB" id="HostDB:ENSG00000213047"/>
<dbReference type="eggNOG" id="KOG3569">
    <property type="taxonomic scope" value="Eukaryota"/>
</dbReference>
<dbReference type="GeneTree" id="ENSGT00940000155446"/>
<dbReference type="HOGENOM" id="CLU_008196_4_0_1"/>
<dbReference type="InParanoid" id="Q6P3S1"/>
<dbReference type="OMA" id="CKVCICI"/>
<dbReference type="OrthoDB" id="206724at2759"/>
<dbReference type="PAN-GO" id="Q6P3S1">
    <property type="GO annotations" value="7 GO annotations based on evolutionary models"/>
</dbReference>
<dbReference type="TreeFam" id="TF320336"/>
<dbReference type="PathwayCommons" id="Q6P3S1"/>
<dbReference type="Reactome" id="R-HSA-8876198">
    <property type="pathway name" value="RAB GEFs exchange GTP for GDP on RABs"/>
</dbReference>
<dbReference type="SignaLink" id="Q6P3S1"/>
<dbReference type="BioGRID-ORCS" id="163486">
    <property type="hits" value="7 hits in 1157 CRISPR screens"/>
</dbReference>
<dbReference type="ChiTaRS" id="DENND1B">
    <property type="organism name" value="human"/>
</dbReference>
<dbReference type="EvolutionaryTrace" id="Q6P3S1"/>
<dbReference type="GenomeRNAi" id="163486"/>
<dbReference type="Pharos" id="Q6P3S1">
    <property type="development level" value="Tbio"/>
</dbReference>
<dbReference type="PRO" id="PR:Q6P3S1"/>
<dbReference type="Proteomes" id="UP000005640">
    <property type="component" value="Chromosome 1"/>
</dbReference>
<dbReference type="RNAct" id="Q6P3S1">
    <property type="molecule type" value="protein"/>
</dbReference>
<dbReference type="Bgee" id="ENSG00000213047">
    <property type="expression patterns" value="Expressed in jejunal mucosa and 202 other cell types or tissues"/>
</dbReference>
<dbReference type="ExpressionAtlas" id="Q6P3S1">
    <property type="expression patterns" value="baseline and differential"/>
</dbReference>
<dbReference type="GO" id="GO:0030136">
    <property type="term" value="C:clathrin-coated vesicle"/>
    <property type="evidence" value="ECO:0007669"/>
    <property type="project" value="UniProtKB-SubCell"/>
</dbReference>
<dbReference type="GO" id="GO:0005829">
    <property type="term" value="C:cytosol"/>
    <property type="evidence" value="ECO:0000314"/>
    <property type="project" value="HPA"/>
</dbReference>
<dbReference type="GO" id="GO:0043231">
    <property type="term" value="C:intracellular membrane-bounded organelle"/>
    <property type="evidence" value="ECO:0000318"/>
    <property type="project" value="GO_Central"/>
</dbReference>
<dbReference type="GO" id="GO:0016607">
    <property type="term" value="C:nuclear speck"/>
    <property type="evidence" value="ECO:0000314"/>
    <property type="project" value="HPA"/>
</dbReference>
<dbReference type="GO" id="GO:0005085">
    <property type="term" value="F:guanyl-nucleotide exchange factor activity"/>
    <property type="evidence" value="ECO:0000314"/>
    <property type="project" value="UniProtKB"/>
</dbReference>
<dbReference type="GO" id="GO:1901981">
    <property type="term" value="F:phosphatidylinositol phosphate binding"/>
    <property type="evidence" value="ECO:0000318"/>
    <property type="project" value="GO_Central"/>
</dbReference>
<dbReference type="GO" id="GO:0031267">
    <property type="term" value="F:small GTPase binding"/>
    <property type="evidence" value="ECO:0007669"/>
    <property type="project" value="Ensembl"/>
</dbReference>
<dbReference type="GO" id="GO:0032456">
    <property type="term" value="P:endocytic recycling"/>
    <property type="evidence" value="ECO:0000250"/>
    <property type="project" value="UniProtKB"/>
</dbReference>
<dbReference type="GO" id="GO:0006897">
    <property type="term" value="P:endocytosis"/>
    <property type="evidence" value="ECO:0000318"/>
    <property type="project" value="GO_Central"/>
</dbReference>
<dbReference type="GO" id="GO:2000553">
    <property type="term" value="P:positive regulation of T-helper 2 cell cytokine production"/>
    <property type="evidence" value="ECO:0000315"/>
    <property type="project" value="UniProtKB"/>
</dbReference>
<dbReference type="GO" id="GO:0015031">
    <property type="term" value="P:protein transport"/>
    <property type="evidence" value="ECO:0007669"/>
    <property type="project" value="UniProtKB-KW"/>
</dbReference>
<dbReference type="GO" id="GO:0050776">
    <property type="term" value="P:regulation of immune response"/>
    <property type="evidence" value="ECO:0000250"/>
    <property type="project" value="UniProtKB"/>
</dbReference>
<dbReference type="GO" id="GO:0050852">
    <property type="term" value="P:T cell receptor signaling pathway"/>
    <property type="evidence" value="ECO:0000315"/>
    <property type="project" value="UniProtKB"/>
</dbReference>
<dbReference type="FunFam" id="3.30.450.200:FF:000003">
    <property type="entry name" value="DENN domain containing 1A"/>
    <property type="match status" value="1"/>
</dbReference>
<dbReference type="FunFam" id="3.40.50.11500:FF:000001">
    <property type="entry name" value="Putative DENN domain-containing protein 1A"/>
    <property type="match status" value="1"/>
</dbReference>
<dbReference type="Gene3D" id="3.30.450.200">
    <property type="match status" value="1"/>
</dbReference>
<dbReference type="Gene3D" id="3.40.50.11500">
    <property type="match status" value="1"/>
</dbReference>
<dbReference type="Gene3D" id="6.10.140.1000">
    <property type="match status" value="1"/>
</dbReference>
<dbReference type="InterPro" id="IPR001194">
    <property type="entry name" value="cDENN_dom"/>
</dbReference>
<dbReference type="InterPro" id="IPR005112">
    <property type="entry name" value="dDENN_dom"/>
</dbReference>
<dbReference type="InterPro" id="IPR043153">
    <property type="entry name" value="DENN_C"/>
</dbReference>
<dbReference type="InterPro" id="IPR040032">
    <property type="entry name" value="DENND1A/B/C"/>
</dbReference>
<dbReference type="InterPro" id="IPR037516">
    <property type="entry name" value="Tripartite_DENN"/>
</dbReference>
<dbReference type="InterPro" id="IPR005113">
    <property type="entry name" value="uDENN_dom"/>
</dbReference>
<dbReference type="PANTHER" id="PTHR13196">
    <property type="entry name" value="DENN DOMAIN-CONTAINING"/>
    <property type="match status" value="1"/>
</dbReference>
<dbReference type="PANTHER" id="PTHR13196:SF24">
    <property type="entry name" value="DENN DOMAIN-CONTAINING PROTEIN 1B"/>
    <property type="match status" value="1"/>
</dbReference>
<dbReference type="Pfam" id="PF03455">
    <property type="entry name" value="dDENN"/>
    <property type="match status" value="1"/>
</dbReference>
<dbReference type="Pfam" id="PF02141">
    <property type="entry name" value="DENN"/>
    <property type="match status" value="1"/>
</dbReference>
<dbReference type="Pfam" id="PF03456">
    <property type="entry name" value="uDENN"/>
    <property type="match status" value="1"/>
</dbReference>
<dbReference type="SMART" id="SM00801">
    <property type="entry name" value="dDENN"/>
    <property type="match status" value="1"/>
</dbReference>
<dbReference type="SMART" id="SM00799">
    <property type="entry name" value="DENN"/>
    <property type="match status" value="1"/>
</dbReference>
<dbReference type="SMART" id="SM00800">
    <property type="entry name" value="uDENN"/>
    <property type="match status" value="1"/>
</dbReference>
<dbReference type="PROSITE" id="PS50211">
    <property type="entry name" value="DENN"/>
    <property type="match status" value="1"/>
</dbReference>
<feature type="chain" id="PRO_0000304674" description="DENN domain-containing protein 1B">
    <location>
        <begin position="1"/>
        <end position="775"/>
    </location>
</feature>
<feature type="domain" description="uDENN" evidence="2">
    <location>
        <begin position="14"/>
        <end position="143"/>
    </location>
</feature>
<feature type="domain" description="cDENN" evidence="2">
    <location>
        <begin position="180"/>
        <end position="316"/>
    </location>
</feature>
<feature type="domain" description="dDENN" evidence="2">
    <location>
        <begin position="318"/>
        <end position="395"/>
    </location>
</feature>
<feature type="region of interest" description="Disordered" evidence="3">
    <location>
        <begin position="635"/>
        <end position="654"/>
    </location>
</feature>
<feature type="region of interest" description="Disordered" evidence="3">
    <location>
        <begin position="671"/>
        <end position="706"/>
    </location>
</feature>
<feature type="short sequence motif" description="FXDXF motif" evidence="16">
    <location>
        <begin position="398"/>
        <end position="402"/>
    </location>
</feature>
<feature type="short sequence motif" description="Clathrin box" evidence="16">
    <location>
        <begin position="566"/>
        <end position="575"/>
    </location>
</feature>
<feature type="compositionally biased region" description="Basic residues" evidence="3">
    <location>
        <begin position="639"/>
        <end position="651"/>
    </location>
</feature>
<feature type="compositionally biased region" description="Basic and acidic residues" evidence="3">
    <location>
        <begin position="695"/>
        <end position="706"/>
    </location>
</feature>
<feature type="modified residue" description="Phosphotyrosine" evidence="1">
    <location>
        <position position="520"/>
    </location>
</feature>
<feature type="modified residue" description="Phosphoserine" evidence="1">
    <location>
        <position position="535"/>
    </location>
</feature>
<feature type="modified residue" description="Phosphoserine" evidence="1">
    <location>
        <position position="536"/>
    </location>
</feature>
<feature type="modified residue" description="Phosphoserine" evidence="1">
    <location>
        <position position="549"/>
    </location>
</feature>
<feature type="modified residue" description="Phosphoserine" evidence="1">
    <location>
        <position position="552"/>
    </location>
</feature>
<feature type="modified residue" description="Phosphoserine" evidence="18">
    <location>
        <position position="652"/>
    </location>
</feature>
<feature type="modified residue" description="Phosphoserine" evidence="1">
    <location>
        <position position="653"/>
    </location>
</feature>
<feature type="splice variant" id="VSP_028082" description="In isoform 4." evidence="12">
    <original>MDCRTKANPDRTFDLVLKVKCHASENED</original>
    <variation>MAAAPREEKRWPQPVFSN</variation>
    <location>
        <begin position="1"/>
        <end position="28"/>
    </location>
</feature>
<feature type="splice variant" id="VSP_028083" description="In isoform 2, isoform 3 and isoform 4." evidence="12 13">
    <location>
        <begin position="150"/>
        <end position="169"/>
    </location>
</feature>
<feature type="splice variant" id="VSP_028084" description="In isoform 3." evidence="13">
    <original>ALKNKL</original>
    <variation>MKAIQW</variation>
    <location>
        <begin position="310"/>
        <end position="315"/>
    </location>
</feature>
<feature type="splice variant" id="VSP_028085" description="In isoform 3." evidence="13">
    <location>
        <begin position="316"/>
        <end position="775"/>
    </location>
</feature>
<feature type="splice variant" id="VSP_034515" description="In isoform 4, isoform 2 and isoform 1." evidence="11 12">
    <original>NPRSYQQWVHTVKKGGALFNTAMTKATPAVRTAYKFAKNHAKLGLKEVKSKLKHKENEEDYGTCSSSVQYTPVYKLHNEKGGNSEKRKLAQARLKRPLKSLDGALYDDEDDDDIERASKLSSEDGEEASAYLYESDDSVETRVKTPYSGEMDLLGEILDTLSTHSSDQGKLAAAKSLDFFRSMDDIDYKPTNKSNAPSENNLAFLCGGSGDQAEWNLGQDDSALHGKHLPPSPRKRVSSSGLTDSLFILKEENSNKHLGADNVSDPTSGLDFQLTSPEVSQTDKGKTEKRETLSQISDDLLIPGLGRHSSTFVPWEKEGKEAKETSEDIGLLHEVVSLCHMTSDFQQSLNISDKNTNGNQT</original>
    <variation>KDKLQYDYPFSQ</variation>
    <location>
        <begin position="415"/>
        <end position="775"/>
    </location>
</feature>
<feature type="sequence variant" id="VAR_035055" description="In dbSNP:rs7546381.">
    <original>V</original>
    <variation>M</variation>
    <location>
        <position position="216"/>
    </location>
</feature>
<feature type="mutagenesis site" description="Causes only a slight reduction in AP2B1-binding." evidence="5">
    <original>K</original>
    <variation>A</variation>
    <location>
        <position position="489"/>
    </location>
</feature>
<feature type="mutagenesis site" description="Greatly reduce AP2B1-binding." evidence="5">
    <original>K</original>
    <variation>A</variation>
    <location>
        <position position="500"/>
    </location>
</feature>
<feature type="mutagenesis site" description="No effect." evidence="5">
    <original>R</original>
    <variation>A</variation>
    <location>
        <position position="501"/>
    </location>
</feature>
<feature type="mutagenesis site" description="Almost completely abolishes AP2B1-binding." evidence="5">
    <original>K</original>
    <variation>A</variation>
    <location>
        <position position="502"/>
    </location>
</feature>
<feature type="mutagenesis site" description="No effect." evidence="5">
    <original>R</original>
    <variation>A</variation>
    <location>
        <position position="507"/>
    </location>
</feature>
<feature type="mutagenesis site" description="Greatly reduce AP2B1-binding." evidence="5">
    <original>K</original>
    <variation>A</variation>
    <location>
        <position position="509"/>
    </location>
</feature>
<feature type="sequence conflict" description="In Ref. 3; AAH22561." evidence="15" ref="3">
    <original>S</original>
    <variation>Y</variation>
    <location>
        <position position="340"/>
    </location>
</feature>
<feature type="strand" evidence="19">
    <location>
        <begin position="10"/>
        <end position="12"/>
    </location>
</feature>
<feature type="strand" evidence="19">
    <location>
        <begin position="14"/>
        <end position="20"/>
    </location>
</feature>
<feature type="strand" evidence="19">
    <location>
        <begin position="30"/>
        <end position="36"/>
    </location>
</feature>
<feature type="helix" evidence="19">
    <location>
        <begin position="42"/>
        <end position="52"/>
    </location>
</feature>
<feature type="helix" evidence="19">
    <location>
        <begin position="57"/>
        <end position="60"/>
    </location>
</feature>
<feature type="helix" evidence="19">
    <location>
        <begin position="61"/>
        <end position="63"/>
    </location>
</feature>
<feature type="strand" evidence="19">
    <location>
        <begin position="66"/>
        <end position="74"/>
    </location>
</feature>
<feature type="strand" evidence="19">
    <location>
        <begin position="80"/>
        <end position="87"/>
    </location>
</feature>
<feature type="strand" evidence="19">
    <location>
        <begin position="91"/>
        <end position="101"/>
    </location>
</feature>
<feature type="helix" evidence="19">
    <location>
        <begin position="104"/>
        <end position="119"/>
    </location>
</feature>
<feature type="helix" evidence="19">
    <location>
        <begin position="123"/>
        <end position="135"/>
    </location>
</feature>
<feature type="helix" evidence="19">
    <location>
        <begin position="188"/>
        <end position="196"/>
    </location>
</feature>
<feature type="helix" evidence="19">
    <location>
        <begin position="199"/>
        <end position="209"/>
    </location>
</feature>
<feature type="turn" evidence="19">
    <location>
        <begin position="210"/>
        <end position="212"/>
    </location>
</feature>
<feature type="strand" evidence="19">
    <location>
        <begin position="214"/>
        <end position="220"/>
    </location>
</feature>
<feature type="helix" evidence="19">
    <location>
        <begin position="222"/>
        <end position="234"/>
    </location>
</feature>
<feature type="turn" evidence="19">
    <location>
        <begin position="235"/>
        <end position="238"/>
    </location>
</feature>
<feature type="strand" evidence="19">
    <location>
        <begin position="243"/>
        <end position="248"/>
    </location>
</feature>
<feature type="helix" evidence="19">
    <location>
        <begin position="251"/>
        <end position="258"/>
    </location>
</feature>
<feature type="strand" evidence="19">
    <location>
        <begin position="263"/>
        <end position="268"/>
    </location>
</feature>
<feature type="turn" evidence="19">
    <location>
        <begin position="269"/>
        <end position="271"/>
    </location>
</feature>
<feature type="helix" evidence="19">
    <location>
        <begin position="272"/>
        <end position="276"/>
    </location>
</feature>
<feature type="strand" evidence="19">
    <location>
        <begin position="284"/>
        <end position="287"/>
    </location>
</feature>
<feature type="turn" evidence="19">
    <location>
        <begin position="288"/>
        <end position="291"/>
    </location>
</feature>
<feature type="strand" evidence="19">
    <location>
        <begin position="292"/>
        <end position="294"/>
    </location>
</feature>
<feature type="helix" evidence="19">
    <location>
        <begin position="300"/>
        <end position="302"/>
    </location>
</feature>
<feature type="helix" evidence="19">
    <location>
        <begin position="305"/>
        <end position="315"/>
    </location>
</feature>
<feature type="helix" evidence="19">
    <location>
        <begin position="318"/>
        <end position="321"/>
    </location>
</feature>
<feature type="helix" evidence="19">
    <location>
        <begin position="325"/>
        <end position="338"/>
    </location>
</feature>
<feature type="helix" evidence="19">
    <location>
        <begin position="339"/>
        <end position="341"/>
    </location>
</feature>
<feature type="helix" evidence="19">
    <location>
        <begin position="357"/>
        <end position="360"/>
    </location>
</feature>
<feature type="helix" evidence="19">
    <location>
        <begin position="366"/>
        <end position="375"/>
    </location>
</feature>
<feature type="helix" evidence="19">
    <location>
        <begin position="379"/>
        <end position="391"/>
    </location>
</feature>